<feature type="chain" id="PRO_0000046458" description="DNA polymerase epsilon catalytic subunit A">
    <location>
        <begin position="1"/>
        <end position="2230"/>
    </location>
</feature>
<feature type="zinc finger region" description="CysA-type" evidence="2">
    <location>
        <begin position="2101"/>
        <end position="2139"/>
    </location>
</feature>
<feature type="region of interest" description="Disordered" evidence="3">
    <location>
        <begin position="1"/>
        <end position="24"/>
    </location>
</feature>
<feature type="short sequence motif" description="CysB motif" evidence="2">
    <location>
        <begin position="2170"/>
        <end position="2187"/>
    </location>
</feature>
<feature type="compositionally biased region" description="Polar residues" evidence="3">
    <location>
        <begin position="1"/>
        <end position="19"/>
    </location>
</feature>
<feature type="binding site" evidence="2">
    <location>
        <position position="2101"/>
    </location>
    <ligand>
        <name>Zn(2+)</name>
        <dbReference type="ChEBI" id="CHEBI:29105"/>
    </ligand>
</feature>
<feature type="binding site" evidence="2">
    <location>
        <position position="2104"/>
    </location>
    <ligand>
        <name>Zn(2+)</name>
        <dbReference type="ChEBI" id="CHEBI:29105"/>
    </ligand>
</feature>
<feature type="binding site" evidence="2">
    <location>
        <position position="2136"/>
    </location>
    <ligand>
        <name>Zn(2+)</name>
        <dbReference type="ChEBI" id="CHEBI:29105"/>
    </ligand>
</feature>
<feature type="binding site" evidence="2">
    <location>
        <position position="2139"/>
    </location>
    <ligand>
        <name>Zn(2+)</name>
        <dbReference type="ChEBI" id="CHEBI:29105"/>
    </ligand>
</feature>
<feature type="binding site" evidence="2">
    <location>
        <position position="2170"/>
    </location>
    <ligand>
        <name>[4Fe-4S] cluster</name>
        <dbReference type="ChEBI" id="CHEBI:49883"/>
    </ligand>
</feature>
<feature type="binding site" evidence="2">
    <location>
        <position position="2173"/>
    </location>
    <ligand>
        <name>[4Fe-4S] cluster</name>
        <dbReference type="ChEBI" id="CHEBI:49883"/>
    </ligand>
</feature>
<feature type="binding site" evidence="2">
    <location>
        <position position="2185"/>
    </location>
    <ligand>
        <name>[4Fe-4S] cluster</name>
        <dbReference type="ChEBI" id="CHEBI:49883"/>
    </ligand>
</feature>
<feature type="binding site" evidence="2">
    <location>
        <position position="2187"/>
    </location>
    <ligand>
        <name>[4Fe-4S] cluster</name>
        <dbReference type="ChEBI" id="CHEBI:49883"/>
    </ligand>
</feature>
<gene>
    <name type="primary">pol2</name>
    <name type="ORF">AFUA_3G09560</name>
</gene>
<accession>Q4WXH8</accession>
<dbReference type="EC" id="2.7.7.7" evidence="2"/>
<dbReference type="EMBL" id="AAHF01000002">
    <property type="protein sequence ID" value="EAL92625.1"/>
    <property type="molecule type" value="Genomic_DNA"/>
</dbReference>
<dbReference type="RefSeq" id="XP_754663.1">
    <property type="nucleotide sequence ID" value="XM_749570.1"/>
</dbReference>
<dbReference type="SMR" id="Q4WXH8"/>
<dbReference type="FunCoup" id="Q4WXH8">
    <property type="interactions" value="700"/>
</dbReference>
<dbReference type="STRING" id="330879.Q4WXH8"/>
<dbReference type="EnsemblFungi" id="EAL92625">
    <property type="protein sequence ID" value="EAL92625"/>
    <property type="gene ID" value="AFUA_3G09560"/>
</dbReference>
<dbReference type="GeneID" id="3511701"/>
<dbReference type="KEGG" id="afm:AFUA_3G09560"/>
<dbReference type="eggNOG" id="KOG1798">
    <property type="taxonomic scope" value="Eukaryota"/>
</dbReference>
<dbReference type="HOGENOM" id="CLU_000556_0_1_1"/>
<dbReference type="InParanoid" id="Q4WXH8"/>
<dbReference type="OMA" id="MLDQCRY"/>
<dbReference type="OrthoDB" id="10060449at2759"/>
<dbReference type="PHI-base" id="PHI:9540"/>
<dbReference type="Proteomes" id="UP000002530">
    <property type="component" value="Chromosome 3"/>
</dbReference>
<dbReference type="GO" id="GO:0140445">
    <property type="term" value="C:chromosome, telomeric repeat region"/>
    <property type="evidence" value="ECO:0007669"/>
    <property type="project" value="EnsemblFungi"/>
</dbReference>
<dbReference type="GO" id="GO:0008622">
    <property type="term" value="C:epsilon DNA polymerase complex"/>
    <property type="evidence" value="ECO:0000318"/>
    <property type="project" value="GO_Central"/>
</dbReference>
<dbReference type="GO" id="GO:0043596">
    <property type="term" value="C:nuclear replication fork"/>
    <property type="evidence" value="ECO:0007669"/>
    <property type="project" value="EnsemblFungi"/>
</dbReference>
<dbReference type="GO" id="GO:0051539">
    <property type="term" value="F:4 iron, 4 sulfur cluster binding"/>
    <property type="evidence" value="ECO:0007669"/>
    <property type="project" value="UniProtKB-KW"/>
</dbReference>
<dbReference type="GO" id="GO:0003677">
    <property type="term" value="F:DNA binding"/>
    <property type="evidence" value="ECO:0000318"/>
    <property type="project" value="GO_Central"/>
</dbReference>
<dbReference type="GO" id="GO:0003887">
    <property type="term" value="F:DNA-directed DNA polymerase activity"/>
    <property type="evidence" value="ECO:0000318"/>
    <property type="project" value="GO_Central"/>
</dbReference>
<dbReference type="GO" id="GO:0003690">
    <property type="term" value="F:double-stranded DNA binding"/>
    <property type="evidence" value="ECO:0007669"/>
    <property type="project" value="EnsemblFungi"/>
</dbReference>
<dbReference type="GO" id="GO:0000166">
    <property type="term" value="F:nucleotide binding"/>
    <property type="evidence" value="ECO:0007669"/>
    <property type="project" value="InterPro"/>
</dbReference>
<dbReference type="GO" id="GO:0008310">
    <property type="term" value="F:single-stranded DNA 3'-5' DNA exonuclease activity"/>
    <property type="evidence" value="ECO:0000318"/>
    <property type="project" value="GO_Central"/>
</dbReference>
<dbReference type="GO" id="GO:0003697">
    <property type="term" value="F:single-stranded DNA binding"/>
    <property type="evidence" value="ECO:0007669"/>
    <property type="project" value="EnsemblFungi"/>
</dbReference>
<dbReference type="GO" id="GO:0032183">
    <property type="term" value="F:SUMO binding"/>
    <property type="evidence" value="ECO:0007669"/>
    <property type="project" value="EnsemblFungi"/>
</dbReference>
<dbReference type="GO" id="GO:0008270">
    <property type="term" value="F:zinc ion binding"/>
    <property type="evidence" value="ECO:0007669"/>
    <property type="project" value="UniProtKB-KW"/>
</dbReference>
<dbReference type="GO" id="GO:0006287">
    <property type="term" value="P:base-excision repair, gap-filling"/>
    <property type="evidence" value="ECO:0000318"/>
    <property type="project" value="GO_Central"/>
</dbReference>
<dbReference type="GO" id="GO:0034080">
    <property type="term" value="P:CENP-A containing chromatin assembly"/>
    <property type="evidence" value="ECO:0007669"/>
    <property type="project" value="EnsemblFungi"/>
</dbReference>
<dbReference type="GO" id="GO:0140529">
    <property type="term" value="P:CMG complex assembly"/>
    <property type="evidence" value="ECO:0007669"/>
    <property type="project" value="EnsemblFungi"/>
</dbReference>
<dbReference type="GO" id="GO:0045004">
    <property type="term" value="P:DNA replication proofreading"/>
    <property type="evidence" value="ECO:0000318"/>
    <property type="project" value="GO_Central"/>
</dbReference>
<dbReference type="GO" id="GO:0006303">
    <property type="term" value="P:double-strand break repair via nonhomologous end joining"/>
    <property type="evidence" value="ECO:0007669"/>
    <property type="project" value="EnsemblFungi"/>
</dbReference>
<dbReference type="GO" id="GO:0042276">
    <property type="term" value="P:error-prone translesion synthesis"/>
    <property type="evidence" value="ECO:0007669"/>
    <property type="project" value="EnsemblFungi"/>
</dbReference>
<dbReference type="GO" id="GO:0035822">
    <property type="term" value="P:gene conversion"/>
    <property type="evidence" value="ECO:0007669"/>
    <property type="project" value="EnsemblFungi"/>
</dbReference>
<dbReference type="GO" id="GO:0006272">
    <property type="term" value="P:leading strand elongation"/>
    <property type="evidence" value="ECO:0000318"/>
    <property type="project" value="GO_Central"/>
</dbReference>
<dbReference type="GO" id="GO:0000278">
    <property type="term" value="P:mitotic cell cycle"/>
    <property type="evidence" value="ECO:0000318"/>
    <property type="project" value="GO_Central"/>
</dbReference>
<dbReference type="GO" id="GO:0033314">
    <property type="term" value="P:mitotic DNA replication checkpoint signaling"/>
    <property type="evidence" value="ECO:0007669"/>
    <property type="project" value="EnsemblFungi"/>
</dbReference>
<dbReference type="GO" id="GO:1902975">
    <property type="term" value="P:mitotic DNA replication initiation"/>
    <property type="evidence" value="ECO:0007669"/>
    <property type="project" value="EnsemblFungi"/>
</dbReference>
<dbReference type="GO" id="GO:1903460">
    <property type="term" value="P:mitotic DNA replication leading strand elongation"/>
    <property type="evidence" value="ECO:0007669"/>
    <property type="project" value="EnsemblFungi"/>
</dbReference>
<dbReference type="GO" id="GO:0031573">
    <property type="term" value="P:mitotic intra-S DNA damage checkpoint signaling"/>
    <property type="evidence" value="ECO:0007669"/>
    <property type="project" value="EnsemblFungi"/>
</dbReference>
<dbReference type="GO" id="GO:0007064">
    <property type="term" value="P:mitotic sister chromatid cohesion"/>
    <property type="evidence" value="ECO:0007669"/>
    <property type="project" value="EnsemblFungi"/>
</dbReference>
<dbReference type="GO" id="GO:0006297">
    <property type="term" value="P:nucleotide-excision repair, DNA gap filling"/>
    <property type="evidence" value="ECO:0000318"/>
    <property type="project" value="GO_Central"/>
</dbReference>
<dbReference type="GO" id="GO:0031048">
    <property type="term" value="P:regulatory ncRNA-mediated heterochromatin formation"/>
    <property type="evidence" value="ECO:0007669"/>
    <property type="project" value="EnsemblFungi"/>
</dbReference>
<dbReference type="CDD" id="cd05779">
    <property type="entry name" value="DNA_polB_epsilon_exo"/>
    <property type="match status" value="1"/>
</dbReference>
<dbReference type="CDD" id="cd05535">
    <property type="entry name" value="POLBc_epsilon"/>
    <property type="match status" value="1"/>
</dbReference>
<dbReference type="FunFam" id="1.10.132.60:FF:000002">
    <property type="entry name" value="DNA polymerase epsilon catalytic subunit"/>
    <property type="match status" value="1"/>
</dbReference>
<dbReference type="FunFam" id="1.10.287.690:FF:000005">
    <property type="entry name" value="DNA polymerase epsilon catalytic subunit"/>
    <property type="match status" value="1"/>
</dbReference>
<dbReference type="FunFam" id="3.30.420.10:FF:000015">
    <property type="entry name" value="DNA polymerase epsilon catalytic subunit"/>
    <property type="match status" value="1"/>
</dbReference>
<dbReference type="FunFam" id="3.90.1600.10:FF:000006">
    <property type="entry name" value="DNA polymerase epsilon catalytic subunit"/>
    <property type="match status" value="1"/>
</dbReference>
<dbReference type="Gene3D" id="1.10.132.60">
    <property type="entry name" value="DNA polymerase family B, C-terminal domain"/>
    <property type="match status" value="1"/>
</dbReference>
<dbReference type="Gene3D" id="3.30.342.10">
    <property type="entry name" value="DNA Polymerase, chain B, domain 1"/>
    <property type="match status" value="1"/>
</dbReference>
<dbReference type="Gene3D" id="3.90.1600.10">
    <property type="entry name" value="Palm domain of DNA polymerase"/>
    <property type="match status" value="1"/>
</dbReference>
<dbReference type="Gene3D" id="3.30.420.10">
    <property type="entry name" value="Ribonuclease H-like superfamily/Ribonuclease H"/>
    <property type="match status" value="1"/>
</dbReference>
<dbReference type="InterPro" id="IPR006172">
    <property type="entry name" value="DNA-dir_DNA_pol_B"/>
</dbReference>
<dbReference type="InterPro" id="IPR006133">
    <property type="entry name" value="DNA-dir_DNA_pol_B_exonuc"/>
</dbReference>
<dbReference type="InterPro" id="IPR006134">
    <property type="entry name" value="DNA-dir_DNA_pol_B_multi_dom"/>
</dbReference>
<dbReference type="InterPro" id="IPR043502">
    <property type="entry name" value="DNA/RNA_pol_sf"/>
</dbReference>
<dbReference type="InterPro" id="IPR042087">
    <property type="entry name" value="DNA_pol_B_thumb"/>
</dbReference>
<dbReference type="InterPro" id="IPR013697">
    <property type="entry name" value="DNA_pol_e_suA_C"/>
</dbReference>
<dbReference type="InterPro" id="IPR023211">
    <property type="entry name" value="DNA_pol_palm_dom_sf"/>
</dbReference>
<dbReference type="InterPro" id="IPR029703">
    <property type="entry name" value="POL2"/>
</dbReference>
<dbReference type="InterPro" id="IPR055191">
    <property type="entry name" value="POL2_thumb"/>
</dbReference>
<dbReference type="InterPro" id="IPR012337">
    <property type="entry name" value="RNaseH-like_sf"/>
</dbReference>
<dbReference type="InterPro" id="IPR036397">
    <property type="entry name" value="RNaseH_sf"/>
</dbReference>
<dbReference type="InterPro" id="IPR054475">
    <property type="entry name" value="Znf-DPOE"/>
</dbReference>
<dbReference type="PANTHER" id="PTHR10670">
    <property type="entry name" value="DNA POLYMERASE EPSILON CATALYTIC SUBUNIT A"/>
    <property type="match status" value="1"/>
</dbReference>
<dbReference type="PANTHER" id="PTHR10670:SF0">
    <property type="entry name" value="DNA POLYMERASE EPSILON CATALYTIC SUBUNIT A"/>
    <property type="match status" value="1"/>
</dbReference>
<dbReference type="Pfam" id="PF00136">
    <property type="entry name" value="DNA_pol_B"/>
    <property type="match status" value="1"/>
</dbReference>
<dbReference type="Pfam" id="PF03104">
    <property type="entry name" value="DNA_pol_B_exo1"/>
    <property type="match status" value="1"/>
</dbReference>
<dbReference type="Pfam" id="PF08490">
    <property type="entry name" value="DUF1744"/>
    <property type="match status" value="1"/>
</dbReference>
<dbReference type="Pfam" id="PF22634">
    <property type="entry name" value="POL2_thumb"/>
    <property type="match status" value="1"/>
</dbReference>
<dbReference type="Pfam" id="PF22912">
    <property type="entry name" value="zf-DPOE"/>
    <property type="match status" value="1"/>
</dbReference>
<dbReference type="Pfam" id="PF23250">
    <property type="entry name" value="zf_DPOE_2"/>
    <property type="match status" value="1"/>
</dbReference>
<dbReference type="SMART" id="SM01159">
    <property type="entry name" value="DUF1744"/>
    <property type="match status" value="1"/>
</dbReference>
<dbReference type="SMART" id="SM00486">
    <property type="entry name" value="POLBc"/>
    <property type="match status" value="1"/>
</dbReference>
<dbReference type="SUPFAM" id="SSF56672">
    <property type="entry name" value="DNA/RNA polymerases"/>
    <property type="match status" value="1"/>
</dbReference>
<dbReference type="SUPFAM" id="SSF53098">
    <property type="entry name" value="Ribonuclease H-like"/>
    <property type="match status" value="1"/>
</dbReference>
<organism>
    <name type="scientific">Aspergillus fumigatus (strain ATCC MYA-4609 / CBS 101355 / FGSC A1100 / Af293)</name>
    <name type="common">Neosartorya fumigata</name>
    <dbReference type="NCBI Taxonomy" id="330879"/>
    <lineage>
        <taxon>Eukaryota</taxon>
        <taxon>Fungi</taxon>
        <taxon>Dikarya</taxon>
        <taxon>Ascomycota</taxon>
        <taxon>Pezizomycotina</taxon>
        <taxon>Eurotiomycetes</taxon>
        <taxon>Eurotiomycetidae</taxon>
        <taxon>Eurotiales</taxon>
        <taxon>Aspergillaceae</taxon>
        <taxon>Aspergillus</taxon>
        <taxon>Aspergillus subgen. Fumigati</taxon>
    </lineage>
</organism>
<reference key="1">
    <citation type="journal article" date="2005" name="Nature">
        <title>Genomic sequence of the pathogenic and allergenic filamentous fungus Aspergillus fumigatus.</title>
        <authorList>
            <person name="Nierman W.C."/>
            <person name="Pain A."/>
            <person name="Anderson M.J."/>
            <person name="Wortman J.R."/>
            <person name="Kim H.S."/>
            <person name="Arroyo J."/>
            <person name="Berriman M."/>
            <person name="Abe K."/>
            <person name="Archer D.B."/>
            <person name="Bermejo C."/>
            <person name="Bennett J.W."/>
            <person name="Bowyer P."/>
            <person name="Chen D."/>
            <person name="Collins M."/>
            <person name="Coulsen R."/>
            <person name="Davies R."/>
            <person name="Dyer P.S."/>
            <person name="Farman M.L."/>
            <person name="Fedorova N."/>
            <person name="Fedorova N.D."/>
            <person name="Feldblyum T.V."/>
            <person name="Fischer R."/>
            <person name="Fosker N."/>
            <person name="Fraser A."/>
            <person name="Garcia J.L."/>
            <person name="Garcia M.J."/>
            <person name="Goble A."/>
            <person name="Goldman G.H."/>
            <person name="Gomi K."/>
            <person name="Griffith-Jones S."/>
            <person name="Gwilliam R."/>
            <person name="Haas B.J."/>
            <person name="Haas H."/>
            <person name="Harris D.E."/>
            <person name="Horiuchi H."/>
            <person name="Huang J."/>
            <person name="Humphray S."/>
            <person name="Jimenez J."/>
            <person name="Keller N."/>
            <person name="Khouri H."/>
            <person name="Kitamoto K."/>
            <person name="Kobayashi T."/>
            <person name="Konzack S."/>
            <person name="Kulkarni R."/>
            <person name="Kumagai T."/>
            <person name="Lafton A."/>
            <person name="Latge J.-P."/>
            <person name="Li W."/>
            <person name="Lord A."/>
            <person name="Lu C."/>
            <person name="Majoros W.H."/>
            <person name="May G.S."/>
            <person name="Miller B.L."/>
            <person name="Mohamoud Y."/>
            <person name="Molina M."/>
            <person name="Monod M."/>
            <person name="Mouyna I."/>
            <person name="Mulligan S."/>
            <person name="Murphy L.D."/>
            <person name="O'Neil S."/>
            <person name="Paulsen I."/>
            <person name="Penalva M.A."/>
            <person name="Pertea M."/>
            <person name="Price C."/>
            <person name="Pritchard B.L."/>
            <person name="Quail M.A."/>
            <person name="Rabbinowitsch E."/>
            <person name="Rawlins N."/>
            <person name="Rajandream M.A."/>
            <person name="Reichard U."/>
            <person name="Renauld H."/>
            <person name="Robson G.D."/>
            <person name="Rodriguez de Cordoba S."/>
            <person name="Rodriguez-Pena J.M."/>
            <person name="Ronning C.M."/>
            <person name="Rutter S."/>
            <person name="Salzberg S.L."/>
            <person name="Sanchez M."/>
            <person name="Sanchez-Ferrero J.C."/>
            <person name="Saunders D."/>
            <person name="Seeger K."/>
            <person name="Squares R."/>
            <person name="Squares S."/>
            <person name="Takeuchi M."/>
            <person name="Tekaia F."/>
            <person name="Turner G."/>
            <person name="Vazquez de Aldana C.R."/>
            <person name="Weidman J."/>
            <person name="White O."/>
            <person name="Woodward J.R."/>
            <person name="Yu J.-H."/>
            <person name="Fraser C.M."/>
            <person name="Galagan J.E."/>
            <person name="Asai K."/>
            <person name="Machida M."/>
            <person name="Hall N."/>
            <person name="Barrell B.G."/>
            <person name="Denning D.W."/>
        </authorList>
    </citation>
    <scope>NUCLEOTIDE SEQUENCE [LARGE SCALE GENOMIC DNA]</scope>
    <source>
        <strain>ATCC MYA-4609 / CBS 101355 / FGSC A1100 / Af293</strain>
    </source>
</reference>
<protein>
    <recommendedName>
        <fullName>DNA polymerase epsilon catalytic subunit A</fullName>
        <ecNumber evidence="2">2.7.7.7</ecNumber>
    </recommendedName>
    <alternativeName>
        <fullName>DNA polymerase II subunit A</fullName>
    </alternativeName>
</protein>
<evidence type="ECO:0000250" key="1"/>
<evidence type="ECO:0000250" key="2">
    <source>
        <dbReference type="UniProtKB" id="P15436"/>
    </source>
</evidence>
<evidence type="ECO:0000256" key="3">
    <source>
        <dbReference type="SAM" id="MobiDB-lite"/>
    </source>
</evidence>
<evidence type="ECO:0000305" key="4"/>
<name>DPOE_ASPFU</name>
<sequence>MPTRQPSKYGNKFRSSSASFKPKRTKTVEFSSLRSTEATSQDEKFEAIRLANSIDEALGFPRFESGEKRVGWLINMHSTSIEDPNVPGGRAGVDYYFLEDGGGSFKATVEYDPYFLLAVKKGHEAEVEEWCRRMFEGLIKTIKRVEKEDLQLPNHLLGHRRTFLQLNFANVSHLLDVRKTLLPLAEKNKKNVNVMDTYAEISSANAGFDLFDDELINESRPNSNMNASDYIIDIREYDVPYHVRVAIDKDIRIGKWYTVEAKHGVISLTCLEERLQRADPVILAFDIETTKLPLKFPDSVIDQIMMISYMIDGQGFLITNREIVSEDIRDFEYTPKPEYSGPFMIFNEPNERSVIERFFEHIKEAKPTVIATYNGDFFDWPFVEARASVLGIDMYKEIGFRKNSEDIYQSDHCVHMDCFAWVNRDSYLPQGSRGLKAVTVAKLGYDPDELDPELMTPYASERPQTLAEYSVSDAVATYYLYMKYVHPFIFSLCTIIPLNPDDTLRKGTGTLCEMLLMVQAYKGEIVLPNKHKDPPESFYEGHLLESETYVGGHVESIEAGVFRSDIPVTFNIDTTAIDELLRDLDAALKFSIEVEEKKSMDDVVNYEDVKAQIAERLVNLREKPHRDEVPSIYHLDVASMYPNIMITNRLQPDSMIQESDCAACDFNRPGKTCDRRLPWAWRGEFLPAKRDEYNMIRQAVANELFPGRTKNSPMRSFGEMSAEEQAAIIKKRLQDYSKKIYHKIHDSKTIVREAIICQRENPFYVDTVRSFRDRRYDFKGKQKVWKGKTEALKAAGASAAEIEEAKKMIVLFDSLQLAHKVILNSFYGYVMRKGSRWYSMEMAGVTCLTGAHIIQMARELVERIGRPLELDTDGIWCMLPGSFPEDFSFTLKNGKKLGISYPCVMLNHLVHGKYTNHQYQTLVDPKTFRYETHSDNSIFFEVDGPYKAMILPTSKEEDKNLKKRYAVFNHDGSLAELKGFEVKRRGELKLIKIFQTQIFRFFLEGSTLEETYAAVARVADRWLDVLYDHGATLADEELIELISENRSMTKTLEEYGNQKSTSITTARRLAEFLGEQMVKDKGLNCKYIISAKPKNTPVTERAIPVTIFSAEEPVKRFFLRKWLKDDPGDMDPRSVIDWDYYLERLGSVVQKLITIPAALQKVRNPVPRVAHPDWLQRRINMKEDKFKQTKMTDMFGKTEKNPLSNISTNILDHRVQHHGDIGEAVANSTQKLKSSPNGKISQKRKHPEGLTKTLLDPFASLPAIMPSLNDDYVGFLKYQKQKWKIQKQARARRRQLFGERVNVATDSLSNLFRNQAELLYINTWQILQLCETGRPGLVRAFVLIDRKIHALTIKVPRQIYVNLKRDSLPDVDVPDCEVEKVNHTLPNGHPSVHLFKLTLSEDTYLRETDKIDALLQHPSIEGVYEKNIPLSVRAVLKLGSVCTFDEEQRGVLGEGLDRGFNLSTLCHTTPDEPYLLNSPLVYHYLYHVLSGDRQIFALFSTTKSEAHIVILNRTRDVQGLPNVDKIYAELRARTMENMGGDQSQNAFEYQEKIHFKTTQVTTRRKAYLEIGDLIKKLKGEETQPVIMVIQSHQRHRLCHDIPILKEYPVLPVKPEVSDMDLPPLGWQSFIAKRLVTHYLYLASWIHHLTMLARYGDVPLCNLENDDPRYLIDISYARRLQQNNVVLWWSNGPRPDHAGYEKDDVTGSLERVSMPSVNVPSAYNTVCIELEVRNLSINTILTSSIINELEGADTLLASSEPSADANGSGVLYSEKAFASAGAVVLREMVKHWWSEACEGNNMADIMVQHLIRWVESPVSCLYDRSLHDYVRMLSRKSFQRLMAEFRRVGSNVIFASPTRLLLQTTKTEVGNAYAYSQYVLKSIRANASFHFIDLEIKEYWDYLVWYDEYNYGGKGCRKVTGSEDQELETVMHWQLSRFLPAPMQTIFHDWVVEYIELMHGLKRTDSDDSSTPRLTQLPVGNHNEDNDEITSILAEKFSKPLKKQISGLIRRQRDELLHPELASDYVFPVLPGVLVDPNNDKRNPVLELVKLLMQVLSLSKTTTLETRLLRRELLAMFEVREFSKEGRFENPGASLKLPELSCNACCLIRDLDLCRDEDVLPEMGSDPNKAAPKPWRCPFCQTEYDRLAQEEALIGQVQGLIVGWQTQDLKCSKCGGLKISDFMEHCSCSGHWVETMDRNEVEKKLLLLSSVSKFHGLKLLESVVQGVLEQM</sequence>
<proteinExistence type="inferred from homology"/>
<keyword id="KW-0004">4Fe-4S</keyword>
<keyword id="KW-0235">DNA replication</keyword>
<keyword id="KW-0238">DNA-binding</keyword>
<keyword id="KW-0239">DNA-directed DNA polymerase</keyword>
<keyword id="KW-0408">Iron</keyword>
<keyword id="KW-0411">Iron-sulfur</keyword>
<keyword id="KW-0479">Metal-binding</keyword>
<keyword id="KW-0548">Nucleotidyltransferase</keyword>
<keyword id="KW-0539">Nucleus</keyword>
<keyword id="KW-1185">Reference proteome</keyword>
<keyword id="KW-0808">Transferase</keyword>
<keyword id="KW-0862">Zinc</keyword>
<keyword id="KW-0863">Zinc-finger</keyword>
<comment type="function">
    <text evidence="1">DNA polymerase II participates in chromosomal DNA replication.</text>
</comment>
<comment type="catalytic activity">
    <reaction evidence="2">
        <text>DNA(n) + a 2'-deoxyribonucleoside 5'-triphosphate = DNA(n+1) + diphosphate</text>
        <dbReference type="Rhea" id="RHEA:22508"/>
        <dbReference type="Rhea" id="RHEA-COMP:17339"/>
        <dbReference type="Rhea" id="RHEA-COMP:17340"/>
        <dbReference type="ChEBI" id="CHEBI:33019"/>
        <dbReference type="ChEBI" id="CHEBI:61560"/>
        <dbReference type="ChEBI" id="CHEBI:173112"/>
        <dbReference type="EC" id="2.7.7.7"/>
    </reaction>
</comment>
<comment type="cofactor">
    <cofactor evidence="2">
        <name>[4Fe-4S] cluster</name>
        <dbReference type="ChEBI" id="CHEBI:49883"/>
    </cofactor>
    <text evidence="2">Binds 1 [4Fe-4S] cluster.</text>
</comment>
<comment type="subunit">
    <text evidence="1">Heterotetramer. Consists of 4 subunits: pol2, dpb2, dpb3 and dpb4 (By similarity).</text>
</comment>
<comment type="subcellular location">
    <subcellularLocation>
        <location evidence="1">Nucleus</location>
    </subcellularLocation>
</comment>
<comment type="domain">
    <text evidence="2">The CysA-type zinc finger is required for PCNA-binding.</text>
</comment>
<comment type="domain">
    <text evidence="2">The CysB motif binds 1 4Fe-4S cluster and is required for the formation of polymerase complexes.</text>
</comment>
<comment type="similarity">
    <text evidence="4">Belongs to the DNA polymerase type-B family.</text>
</comment>